<accession>Q72CI4</accession>
<organism>
    <name type="scientific">Nitratidesulfovibrio vulgaris (strain ATCC 29579 / DSM 644 / CCUG 34227 / NCIMB 8303 / VKM B-1760 / Hildenborough)</name>
    <name type="common">Desulfovibrio vulgaris</name>
    <dbReference type="NCBI Taxonomy" id="882"/>
    <lineage>
        <taxon>Bacteria</taxon>
        <taxon>Pseudomonadati</taxon>
        <taxon>Thermodesulfobacteriota</taxon>
        <taxon>Desulfovibrionia</taxon>
        <taxon>Desulfovibrionales</taxon>
        <taxon>Desulfovibrionaceae</taxon>
        <taxon>Nitratidesulfovibrio</taxon>
    </lineage>
</organism>
<evidence type="ECO:0000255" key="1">
    <source>
        <dbReference type="HAMAP-Rule" id="MF_00480"/>
    </source>
</evidence>
<evidence type="ECO:0000305" key="2"/>
<name>RS7_NITV2</name>
<protein>
    <recommendedName>
        <fullName evidence="1">Small ribosomal subunit protein uS7</fullName>
    </recommendedName>
    <alternativeName>
        <fullName evidence="2">30S ribosomal protein S7</fullName>
    </alternativeName>
</protein>
<proteinExistence type="inferred from homology"/>
<gene>
    <name evidence="1" type="primary">rpsG</name>
    <name type="ordered locus">DVU_1299</name>
</gene>
<keyword id="KW-1185">Reference proteome</keyword>
<keyword id="KW-0687">Ribonucleoprotein</keyword>
<keyword id="KW-0689">Ribosomal protein</keyword>
<keyword id="KW-0694">RNA-binding</keyword>
<keyword id="KW-0699">rRNA-binding</keyword>
<keyword id="KW-0820">tRNA-binding</keyword>
<feature type="chain" id="PRO_0000124258" description="Small ribosomal subunit protein uS7">
    <location>
        <begin position="1"/>
        <end position="156"/>
    </location>
</feature>
<sequence length="156" mass="17799">MPRKGPVPRREILPDPLYNSRLVARFINRLMYDGKKGAAEKIFYSALDTLAQKTGEEPLKAFEKAIENVKPHLEVKARRVGGATYQVPMEVRPDRQVSLSLRWLIAYSRSRGEKGMVSKLSAELLDAFNNRGGAVKKKEDTHRMAEANKAFAHYRW</sequence>
<comment type="function">
    <text evidence="1">One of the primary rRNA binding proteins, it binds directly to 16S rRNA where it nucleates assembly of the head domain of the 30S subunit. Is located at the subunit interface close to the decoding center, probably blocks exit of the E-site tRNA.</text>
</comment>
<comment type="subunit">
    <text evidence="1">Part of the 30S ribosomal subunit. Contacts proteins S9 and S11.</text>
</comment>
<comment type="similarity">
    <text evidence="1">Belongs to the universal ribosomal protein uS7 family.</text>
</comment>
<dbReference type="EMBL" id="AE017285">
    <property type="protein sequence ID" value="AAS95777.1"/>
    <property type="molecule type" value="Genomic_DNA"/>
</dbReference>
<dbReference type="RefSeq" id="WP_010938594.1">
    <property type="nucleotide sequence ID" value="NC_002937.3"/>
</dbReference>
<dbReference type="RefSeq" id="YP_010518.1">
    <property type="nucleotide sequence ID" value="NC_002937.3"/>
</dbReference>
<dbReference type="SMR" id="Q72CI4"/>
<dbReference type="STRING" id="882.DVU_1299"/>
<dbReference type="PaxDb" id="882-DVU_1299"/>
<dbReference type="EnsemblBacteria" id="AAS95777">
    <property type="protein sequence ID" value="AAS95777"/>
    <property type="gene ID" value="DVU_1299"/>
</dbReference>
<dbReference type="KEGG" id="dvu:DVU_1299"/>
<dbReference type="PATRIC" id="fig|882.5.peg.1211"/>
<dbReference type="eggNOG" id="COG0049">
    <property type="taxonomic scope" value="Bacteria"/>
</dbReference>
<dbReference type="HOGENOM" id="CLU_072226_1_1_7"/>
<dbReference type="OrthoDB" id="9807653at2"/>
<dbReference type="PhylomeDB" id="Q72CI4"/>
<dbReference type="Proteomes" id="UP000002194">
    <property type="component" value="Chromosome"/>
</dbReference>
<dbReference type="GO" id="GO:0015935">
    <property type="term" value="C:small ribosomal subunit"/>
    <property type="evidence" value="ECO:0007669"/>
    <property type="project" value="InterPro"/>
</dbReference>
<dbReference type="GO" id="GO:0019843">
    <property type="term" value="F:rRNA binding"/>
    <property type="evidence" value="ECO:0007669"/>
    <property type="project" value="UniProtKB-UniRule"/>
</dbReference>
<dbReference type="GO" id="GO:0003735">
    <property type="term" value="F:structural constituent of ribosome"/>
    <property type="evidence" value="ECO:0007669"/>
    <property type="project" value="InterPro"/>
</dbReference>
<dbReference type="GO" id="GO:0000049">
    <property type="term" value="F:tRNA binding"/>
    <property type="evidence" value="ECO:0007669"/>
    <property type="project" value="UniProtKB-UniRule"/>
</dbReference>
<dbReference type="GO" id="GO:0006412">
    <property type="term" value="P:translation"/>
    <property type="evidence" value="ECO:0007669"/>
    <property type="project" value="UniProtKB-UniRule"/>
</dbReference>
<dbReference type="CDD" id="cd14869">
    <property type="entry name" value="uS7_Bacteria"/>
    <property type="match status" value="1"/>
</dbReference>
<dbReference type="FunFam" id="1.10.455.10:FF:000001">
    <property type="entry name" value="30S ribosomal protein S7"/>
    <property type="match status" value="1"/>
</dbReference>
<dbReference type="Gene3D" id="1.10.455.10">
    <property type="entry name" value="Ribosomal protein S7 domain"/>
    <property type="match status" value="1"/>
</dbReference>
<dbReference type="HAMAP" id="MF_00480_B">
    <property type="entry name" value="Ribosomal_uS7_B"/>
    <property type="match status" value="1"/>
</dbReference>
<dbReference type="InterPro" id="IPR000235">
    <property type="entry name" value="Ribosomal_uS7"/>
</dbReference>
<dbReference type="InterPro" id="IPR005717">
    <property type="entry name" value="Ribosomal_uS7_bac/org-type"/>
</dbReference>
<dbReference type="InterPro" id="IPR020606">
    <property type="entry name" value="Ribosomal_uS7_CS"/>
</dbReference>
<dbReference type="InterPro" id="IPR023798">
    <property type="entry name" value="Ribosomal_uS7_dom"/>
</dbReference>
<dbReference type="InterPro" id="IPR036823">
    <property type="entry name" value="Ribosomal_uS7_dom_sf"/>
</dbReference>
<dbReference type="NCBIfam" id="TIGR01029">
    <property type="entry name" value="rpsG_bact"/>
    <property type="match status" value="1"/>
</dbReference>
<dbReference type="PANTHER" id="PTHR11205">
    <property type="entry name" value="RIBOSOMAL PROTEIN S7"/>
    <property type="match status" value="1"/>
</dbReference>
<dbReference type="Pfam" id="PF00177">
    <property type="entry name" value="Ribosomal_S7"/>
    <property type="match status" value="1"/>
</dbReference>
<dbReference type="PIRSF" id="PIRSF002122">
    <property type="entry name" value="RPS7p_RPS7a_RPS5e_RPS7o"/>
    <property type="match status" value="1"/>
</dbReference>
<dbReference type="SUPFAM" id="SSF47973">
    <property type="entry name" value="Ribosomal protein S7"/>
    <property type="match status" value="1"/>
</dbReference>
<dbReference type="PROSITE" id="PS00052">
    <property type="entry name" value="RIBOSOMAL_S7"/>
    <property type="match status" value="1"/>
</dbReference>
<reference key="1">
    <citation type="journal article" date="2004" name="Nat. Biotechnol.">
        <title>The genome sequence of the anaerobic, sulfate-reducing bacterium Desulfovibrio vulgaris Hildenborough.</title>
        <authorList>
            <person name="Heidelberg J.F."/>
            <person name="Seshadri R."/>
            <person name="Haveman S.A."/>
            <person name="Hemme C.L."/>
            <person name="Paulsen I.T."/>
            <person name="Kolonay J.F."/>
            <person name="Eisen J.A."/>
            <person name="Ward N.L."/>
            <person name="Methe B.A."/>
            <person name="Brinkac L.M."/>
            <person name="Daugherty S.C."/>
            <person name="DeBoy R.T."/>
            <person name="Dodson R.J."/>
            <person name="Durkin A.S."/>
            <person name="Madupu R."/>
            <person name="Nelson W.C."/>
            <person name="Sullivan S.A."/>
            <person name="Fouts D.E."/>
            <person name="Haft D.H."/>
            <person name="Selengut J."/>
            <person name="Peterson J.D."/>
            <person name="Davidsen T.M."/>
            <person name="Zafar N."/>
            <person name="Zhou L."/>
            <person name="Radune D."/>
            <person name="Dimitrov G."/>
            <person name="Hance M."/>
            <person name="Tran K."/>
            <person name="Khouri H.M."/>
            <person name="Gill J."/>
            <person name="Utterback T.R."/>
            <person name="Feldblyum T.V."/>
            <person name="Wall J.D."/>
            <person name="Voordouw G."/>
            <person name="Fraser C.M."/>
        </authorList>
    </citation>
    <scope>NUCLEOTIDE SEQUENCE [LARGE SCALE GENOMIC DNA]</scope>
    <source>
        <strain>ATCC 29579 / DSM 644 / CCUG 34227 / NCIMB 8303 / VKM B-1760 / Hildenborough</strain>
    </source>
</reference>